<reference key="1">
    <citation type="journal article" date="2004" name="Nat. Genet.">
        <title>Reductive evolution suggested from the complete genome sequence of a plant-pathogenic phytoplasma.</title>
        <authorList>
            <person name="Oshima K."/>
            <person name="Kakizawa S."/>
            <person name="Nishigawa H."/>
            <person name="Jung H.-Y."/>
            <person name="Wei W."/>
            <person name="Suzuki S."/>
            <person name="Arashida R."/>
            <person name="Nakata D."/>
            <person name="Miyata S."/>
            <person name="Ugaki M."/>
            <person name="Namba S."/>
        </authorList>
    </citation>
    <scope>NUCLEOTIDE SEQUENCE [LARGE SCALE GENOMIC DNA]</scope>
    <source>
        <strain>OY-M</strain>
    </source>
</reference>
<protein>
    <recommendedName>
        <fullName evidence="4">Membrane protein-large ribosomal subunit bL9 fusion protein</fullName>
    </recommendedName>
    <alternativeName>
        <fullName>50S ribosomal protein L9</fullName>
    </alternativeName>
</protein>
<feature type="chain" id="PRO_0000258475" description="Membrane protein-large ribosomal subunit bL9 fusion protein">
    <location>
        <begin position="1"/>
        <end position="849"/>
    </location>
</feature>
<feature type="transmembrane region" description="Helical" evidence="1">
    <location>
        <begin position="11"/>
        <end position="31"/>
    </location>
</feature>
<feature type="transmembrane region" description="Helical" evidence="1">
    <location>
        <begin position="64"/>
        <end position="84"/>
    </location>
</feature>
<feature type="domain" description="GGDEF" evidence="3">
    <location>
        <begin position="214"/>
        <end position="342"/>
    </location>
</feature>
<feature type="region of interest" description="Unknown">
    <location>
        <begin position="1"/>
        <end position="680"/>
    </location>
</feature>
<feature type="region of interest" description="Large ribosomal subunit protein bL9" evidence="2">
    <location>
        <begin position="681"/>
        <end position="849"/>
    </location>
</feature>
<sequence>MFSKNKHNTKFIVIACVIVVLILILFCLDFQNIQEIIETINQLTNNQNPSQNTASEMSGMRRKIIFFIFNFFGKIILASFVISFLLHIKKNAQIKRLKNKLSLWSKLSFHVSQIGEEVLNELPIGIVLIDISSQEIQWLNPYASFILKNPEINSPLAQINENMAQLISTSDAIPKTIITLENKKFECFYKKDLNVFYLFDATEKEQIKHLFLQKTLALAMITFDNLAESLIRYDLSEQSQIQGEYLSALSDYIEPYEGYLKQLIDDRFLLLLNRQNLDKMLENKFIILDTIRNISYKYQLKVTLSMGIACWNLSYEKLATYSQNAIELAQKRGGDQVVVNIENEKIKYFGAKIASLSKQSKVHARINAQNLVDILKKHPHCFIMGHTHTDLDALGSVIAFYKIATTIHPESNNYIILDEEKLDKSLIPVYNQLIKTEAKTSLNIITTQQASKMIKDNSLIAVLDTQTKDMVNSPELLSLTSNVVVVDHHRATEEIIPSIFSYVESSASSTVELLVEVMGFLEKEVHITAFEASIMYAGILIDTNAFIYRTSSRTFEVASKLKDLGADAIEVKSWLRKDFDKVLEINKLISEMEIFMDRFAIIQSSEIYENRSFLAQVAEGVLNIRNVDAAFMIAQIADNKIAISARSYNEINVQTIMEQMEGGGHLNSAATQLEGTNIKTVTDTLKHFLKLEYEKGEKNMEIILLTDIPNKGKKHEIIKVNNGYGNFLIQNKKALLADKTNLAAIKQSQMLEQEQKRNHELLMHKLKQEIDDKKITLDIQLGPKGKIYGKITLKQIAEEFLKVHNITLDRKKISLEGEIIAIGIYPVDVFLTDQIKATFFLNVTERKSK</sequence>
<gene>
    <name evidence="2" type="primary">rplI</name>
    <name type="ordered locus">PAM_012</name>
</gene>
<dbReference type="EMBL" id="AP006628">
    <property type="protein sequence ID" value="BAD04097.1"/>
    <property type="status" value="ALT_INIT"/>
    <property type="molecule type" value="Genomic_DNA"/>
</dbReference>
<dbReference type="SMR" id="Q6YRK2"/>
<dbReference type="STRING" id="262768.PAM_012"/>
<dbReference type="KEGG" id="poy:PAM_012"/>
<dbReference type="eggNOG" id="COG0359">
    <property type="taxonomic scope" value="Bacteria"/>
</dbReference>
<dbReference type="eggNOG" id="COG3887">
    <property type="taxonomic scope" value="Bacteria"/>
</dbReference>
<dbReference type="HOGENOM" id="CLU_018278_0_0_14"/>
<dbReference type="BioCyc" id="OYEL262768:G1G26-17-MONOMER"/>
<dbReference type="Proteomes" id="UP000002523">
    <property type="component" value="Chromosome"/>
</dbReference>
<dbReference type="GO" id="GO:0005886">
    <property type="term" value="C:plasma membrane"/>
    <property type="evidence" value="ECO:0007669"/>
    <property type="project" value="UniProtKB-SubCell"/>
</dbReference>
<dbReference type="GO" id="GO:1990904">
    <property type="term" value="C:ribonucleoprotein complex"/>
    <property type="evidence" value="ECO:0007669"/>
    <property type="project" value="UniProtKB-KW"/>
</dbReference>
<dbReference type="GO" id="GO:0005840">
    <property type="term" value="C:ribosome"/>
    <property type="evidence" value="ECO:0007669"/>
    <property type="project" value="UniProtKB-KW"/>
</dbReference>
<dbReference type="GO" id="GO:0019843">
    <property type="term" value="F:rRNA binding"/>
    <property type="evidence" value="ECO:0007669"/>
    <property type="project" value="UniProtKB-UniRule"/>
</dbReference>
<dbReference type="GO" id="GO:0003735">
    <property type="term" value="F:structural constituent of ribosome"/>
    <property type="evidence" value="ECO:0007669"/>
    <property type="project" value="InterPro"/>
</dbReference>
<dbReference type="GO" id="GO:0006412">
    <property type="term" value="P:translation"/>
    <property type="evidence" value="ECO:0007669"/>
    <property type="project" value="UniProtKB-UniRule"/>
</dbReference>
<dbReference type="Gene3D" id="3.10.310.30">
    <property type="match status" value="1"/>
</dbReference>
<dbReference type="Gene3D" id="3.90.1640.10">
    <property type="entry name" value="inorganic pyrophosphatase (n-terminal core)"/>
    <property type="match status" value="1"/>
</dbReference>
<dbReference type="Gene3D" id="3.30.450.20">
    <property type="entry name" value="PAS domain"/>
    <property type="match status" value="1"/>
</dbReference>
<dbReference type="Gene3D" id="3.10.430.100">
    <property type="entry name" value="Ribosomal protein L9, C-terminal domain"/>
    <property type="match status" value="1"/>
</dbReference>
<dbReference type="Gene3D" id="3.40.5.10">
    <property type="entry name" value="Ribosomal protein L9, N-terminal domain"/>
    <property type="match status" value="1"/>
</dbReference>
<dbReference type="HAMAP" id="MF_00503">
    <property type="entry name" value="Ribosomal_bL9"/>
    <property type="match status" value="1"/>
</dbReference>
<dbReference type="InterPro" id="IPR001667">
    <property type="entry name" value="DDH_dom"/>
</dbReference>
<dbReference type="InterPro" id="IPR038763">
    <property type="entry name" value="DHH_sf"/>
</dbReference>
<dbReference type="InterPro" id="IPR003156">
    <property type="entry name" value="DHHA1_dom"/>
</dbReference>
<dbReference type="InterPro" id="IPR049553">
    <property type="entry name" value="GdpP-like_PAS"/>
</dbReference>
<dbReference type="InterPro" id="IPR000160">
    <property type="entry name" value="GGDEF_dom"/>
</dbReference>
<dbReference type="InterPro" id="IPR051319">
    <property type="entry name" value="Oligoribo/pAp-PDE_c-di-AMP_PDE"/>
</dbReference>
<dbReference type="InterPro" id="IPR009027">
    <property type="entry name" value="Ribosomal_bL9/RNase_H1_N"/>
</dbReference>
<dbReference type="InterPro" id="IPR020594">
    <property type="entry name" value="Ribosomal_bL9_bac/chp"/>
</dbReference>
<dbReference type="InterPro" id="IPR020069">
    <property type="entry name" value="Ribosomal_bL9_C"/>
</dbReference>
<dbReference type="InterPro" id="IPR036791">
    <property type="entry name" value="Ribosomal_bL9_C_sf"/>
</dbReference>
<dbReference type="InterPro" id="IPR020070">
    <property type="entry name" value="Ribosomal_bL9_N"/>
</dbReference>
<dbReference type="InterPro" id="IPR036935">
    <property type="entry name" value="Ribosomal_bL9_N_sf"/>
</dbReference>
<dbReference type="NCBIfam" id="TIGR00158">
    <property type="entry name" value="L9"/>
    <property type="match status" value="1"/>
</dbReference>
<dbReference type="NCBIfam" id="NF011110">
    <property type="entry name" value="PRK14538.1"/>
    <property type="match status" value="1"/>
</dbReference>
<dbReference type="PANTHER" id="PTHR47618">
    <property type="entry name" value="BIFUNCTIONAL OLIGORIBONUCLEASE AND PAP PHOSPHATASE NRNA"/>
    <property type="match status" value="1"/>
</dbReference>
<dbReference type="PANTHER" id="PTHR47618:SF2">
    <property type="entry name" value="CYCLIC-DI-AMP PHOSPHODIESTERASE GDPP"/>
    <property type="match status" value="1"/>
</dbReference>
<dbReference type="Pfam" id="PF01368">
    <property type="entry name" value="DHH"/>
    <property type="match status" value="1"/>
</dbReference>
<dbReference type="Pfam" id="PF02272">
    <property type="entry name" value="DHHA1"/>
    <property type="match status" value="1"/>
</dbReference>
<dbReference type="Pfam" id="PF24898">
    <property type="entry name" value="GGDEF_GdpP"/>
    <property type="match status" value="1"/>
</dbReference>
<dbReference type="Pfam" id="PF21370">
    <property type="entry name" value="PAS_GdpP"/>
    <property type="match status" value="1"/>
</dbReference>
<dbReference type="Pfam" id="PF03948">
    <property type="entry name" value="Ribosomal_L9_C"/>
    <property type="match status" value="1"/>
</dbReference>
<dbReference type="Pfam" id="PF01281">
    <property type="entry name" value="Ribosomal_L9_N"/>
    <property type="match status" value="1"/>
</dbReference>
<dbReference type="SMART" id="SM00267">
    <property type="entry name" value="GGDEF"/>
    <property type="match status" value="1"/>
</dbReference>
<dbReference type="SUPFAM" id="SSF64182">
    <property type="entry name" value="DHH phosphoesterases"/>
    <property type="match status" value="1"/>
</dbReference>
<dbReference type="SUPFAM" id="SSF55658">
    <property type="entry name" value="L9 N-domain-like"/>
    <property type="match status" value="1"/>
</dbReference>
<dbReference type="SUPFAM" id="SSF55653">
    <property type="entry name" value="Ribosomal protein L9 C-domain"/>
    <property type="match status" value="1"/>
</dbReference>
<dbReference type="PROSITE" id="PS50887">
    <property type="entry name" value="GGDEF"/>
    <property type="match status" value="1"/>
</dbReference>
<name>RL9_ONYPE</name>
<evidence type="ECO:0000255" key="1"/>
<evidence type="ECO:0000255" key="2">
    <source>
        <dbReference type="HAMAP-Rule" id="MF_00503"/>
    </source>
</evidence>
<evidence type="ECO:0000255" key="3">
    <source>
        <dbReference type="PROSITE-ProRule" id="PRU00095"/>
    </source>
</evidence>
<evidence type="ECO:0000305" key="4"/>
<accession>Q6YRK2</accession>
<organism>
    <name type="scientific">Onion yellows phytoplasma (strain OY-M)</name>
    <dbReference type="NCBI Taxonomy" id="262768"/>
    <lineage>
        <taxon>Bacteria</taxon>
        <taxon>Bacillati</taxon>
        <taxon>Mycoplasmatota</taxon>
        <taxon>Mollicutes</taxon>
        <taxon>Acholeplasmatales</taxon>
        <taxon>Acholeplasmataceae</taxon>
        <taxon>Candidatus Phytoplasma</taxon>
        <taxon>16SrI (Aster yellows group)</taxon>
    </lineage>
</organism>
<proteinExistence type="inferred from homology"/>
<keyword id="KW-1003">Cell membrane</keyword>
<keyword id="KW-0472">Membrane</keyword>
<keyword id="KW-0687">Ribonucleoprotein</keyword>
<keyword id="KW-0689">Ribosomal protein</keyword>
<keyword id="KW-0694">RNA-binding</keyword>
<keyword id="KW-0699">rRNA-binding</keyword>
<keyword id="KW-0812">Transmembrane</keyword>
<keyword id="KW-1133">Transmembrane helix</keyword>
<comment type="function">
    <text evidence="2">Binds to the 23S rRNA.</text>
</comment>
<comment type="subcellular location">
    <subcellularLocation>
        <location evidence="1">Cell membrane</location>
        <topology evidence="1">Multi-pass membrane protein</topology>
    </subcellularLocation>
</comment>
<comment type="miscellaneous">
    <text evidence="4">The large N-terminal domain has 2 potential transmembrane regions and a GGDEF domain.</text>
</comment>
<comment type="similarity">
    <text evidence="2">Belongs to the bacterial ribosomal protein bL9 family.</text>
</comment>
<comment type="sequence caution" evidence="4">
    <conflict type="erroneous initiation">
        <sequence resource="EMBL-CDS" id="BAD04097"/>
    </conflict>
    <text>Extended N-terminus.</text>
</comment>